<comment type="function">
    <text evidence="1">Involved in coproporphyrin-dependent heme b biosynthesis. Catalyzes the insertion of ferrous iron into coproporphyrin III to form Fe-coproporphyrin III.</text>
</comment>
<comment type="catalytic activity">
    <reaction evidence="1">
        <text>Fe-coproporphyrin III + 2 H(+) = coproporphyrin III + Fe(2+)</text>
        <dbReference type="Rhea" id="RHEA:49572"/>
        <dbReference type="ChEBI" id="CHEBI:15378"/>
        <dbReference type="ChEBI" id="CHEBI:29033"/>
        <dbReference type="ChEBI" id="CHEBI:68438"/>
        <dbReference type="ChEBI" id="CHEBI:131725"/>
        <dbReference type="EC" id="4.99.1.9"/>
    </reaction>
    <physiologicalReaction direction="right-to-left" evidence="1">
        <dbReference type="Rhea" id="RHEA:49574"/>
    </physiologicalReaction>
</comment>
<comment type="pathway">
    <text evidence="1">Porphyrin-containing compound metabolism; protoheme biosynthesis.</text>
</comment>
<comment type="subcellular location">
    <subcellularLocation>
        <location evidence="1">Cytoplasm</location>
    </subcellularLocation>
</comment>
<comment type="similarity">
    <text evidence="1">Belongs to the ferrochelatase family.</text>
</comment>
<sequence length="364" mass="42455">MKKAILMMTFGSPEEITFEGVADFFTNIRRGVRPQDHEIQTLYDNYVRIGGTPLQKITRQEVTLVEARLGNEYSVYFANKFSSPFIPDVIGQMEADGIEQCICLILEPHYSFYSVMGYEKFLESKQIQFLVIKDWYQEEALLNYWADEIAKILKEEVKQDSFKVIFSAHSVPIFALDFGDPYIDQIFENSKLVAEKLGLSSEQYTNTWQSESDIGIPWIKPDVLEYLREQTEHPDHYIFVPISFISEHIEVLFDNDVECYDLCQEFGVNYHRPPMPNTDSRLIDALVNTVRVNENQEFKEFLPEEETFDELVPSDETKNILAESEDLQMPEFVKKLIEKKGRENVKMPYLIKKMLEKAGKLPKE</sequence>
<accession>Q04KS4</accession>
<gene>
    <name evidence="1" type="primary">cpfC</name>
    <name type="ordered locus">SPD_0895</name>
</gene>
<proteinExistence type="inferred from homology"/>
<organism>
    <name type="scientific">Streptococcus pneumoniae serotype 2 (strain D39 / NCTC 7466)</name>
    <dbReference type="NCBI Taxonomy" id="373153"/>
    <lineage>
        <taxon>Bacteria</taxon>
        <taxon>Bacillati</taxon>
        <taxon>Bacillota</taxon>
        <taxon>Bacilli</taxon>
        <taxon>Lactobacillales</taxon>
        <taxon>Streptococcaceae</taxon>
        <taxon>Streptococcus</taxon>
    </lineage>
</organism>
<name>CPFC_STRP2</name>
<dbReference type="EC" id="4.99.1.9" evidence="1"/>
<dbReference type="EMBL" id="CP000410">
    <property type="protein sequence ID" value="ABJ55329.1"/>
    <property type="molecule type" value="Genomic_DNA"/>
</dbReference>
<dbReference type="SMR" id="Q04KS4"/>
<dbReference type="PaxDb" id="373153-SPD_0895"/>
<dbReference type="KEGG" id="spd:SPD_0895"/>
<dbReference type="eggNOG" id="COG0276">
    <property type="taxonomic scope" value="Bacteria"/>
</dbReference>
<dbReference type="HOGENOM" id="CLU_018884_2_1_9"/>
<dbReference type="BioCyc" id="SPNE373153:G1G6V-982-MONOMER"/>
<dbReference type="UniPathway" id="UPA00252"/>
<dbReference type="Proteomes" id="UP000001452">
    <property type="component" value="Chromosome"/>
</dbReference>
<dbReference type="GO" id="GO:0005737">
    <property type="term" value="C:cytoplasm"/>
    <property type="evidence" value="ECO:0007669"/>
    <property type="project" value="UniProtKB-SubCell"/>
</dbReference>
<dbReference type="GO" id="GO:0004325">
    <property type="term" value="F:ferrochelatase activity"/>
    <property type="evidence" value="ECO:0007669"/>
    <property type="project" value="UniProtKB-UniRule"/>
</dbReference>
<dbReference type="GO" id="GO:0046872">
    <property type="term" value="F:metal ion binding"/>
    <property type="evidence" value="ECO:0007669"/>
    <property type="project" value="UniProtKB-KW"/>
</dbReference>
<dbReference type="GO" id="GO:0006783">
    <property type="term" value="P:heme biosynthetic process"/>
    <property type="evidence" value="ECO:0007669"/>
    <property type="project" value="UniProtKB-UniRule"/>
</dbReference>
<dbReference type="CDD" id="cd00419">
    <property type="entry name" value="Ferrochelatase_C"/>
    <property type="match status" value="1"/>
</dbReference>
<dbReference type="FunFam" id="3.40.50.1400:FF:000007">
    <property type="entry name" value="Ferrochelatase"/>
    <property type="match status" value="1"/>
</dbReference>
<dbReference type="Gene3D" id="3.40.50.1400">
    <property type="match status" value="2"/>
</dbReference>
<dbReference type="HAMAP" id="MF_00323">
    <property type="entry name" value="Ferrochelatase"/>
    <property type="match status" value="1"/>
</dbReference>
<dbReference type="InterPro" id="IPR001015">
    <property type="entry name" value="Ferrochelatase"/>
</dbReference>
<dbReference type="InterPro" id="IPR019772">
    <property type="entry name" value="Ferrochelatase_AS"/>
</dbReference>
<dbReference type="InterPro" id="IPR033644">
    <property type="entry name" value="Ferrochelatase_C"/>
</dbReference>
<dbReference type="NCBIfam" id="TIGR00109">
    <property type="entry name" value="hemH"/>
    <property type="match status" value="1"/>
</dbReference>
<dbReference type="PANTHER" id="PTHR11108">
    <property type="entry name" value="FERROCHELATASE"/>
    <property type="match status" value="1"/>
</dbReference>
<dbReference type="PANTHER" id="PTHR11108:SF1">
    <property type="entry name" value="FERROCHELATASE, MITOCHONDRIAL"/>
    <property type="match status" value="1"/>
</dbReference>
<dbReference type="Pfam" id="PF00762">
    <property type="entry name" value="Ferrochelatase"/>
    <property type="match status" value="1"/>
</dbReference>
<dbReference type="SUPFAM" id="SSF53800">
    <property type="entry name" value="Chelatase"/>
    <property type="match status" value="1"/>
</dbReference>
<dbReference type="PROSITE" id="PS00534">
    <property type="entry name" value="FERROCHELATASE"/>
    <property type="match status" value="1"/>
</dbReference>
<reference key="1">
    <citation type="journal article" date="2007" name="J. Bacteriol.">
        <title>Genome sequence of Avery's virulent serotype 2 strain D39 of Streptococcus pneumoniae and comparison with that of unencapsulated laboratory strain R6.</title>
        <authorList>
            <person name="Lanie J.A."/>
            <person name="Ng W.-L."/>
            <person name="Kazmierczak K.M."/>
            <person name="Andrzejewski T.M."/>
            <person name="Davidsen T.M."/>
            <person name="Wayne K.J."/>
            <person name="Tettelin H."/>
            <person name="Glass J.I."/>
            <person name="Winkler M.E."/>
        </authorList>
    </citation>
    <scope>NUCLEOTIDE SEQUENCE [LARGE SCALE GENOMIC DNA]</scope>
    <source>
        <strain>D39 / NCTC 7466</strain>
    </source>
</reference>
<keyword id="KW-0963">Cytoplasm</keyword>
<keyword id="KW-0350">Heme biosynthesis</keyword>
<keyword id="KW-0408">Iron</keyword>
<keyword id="KW-0456">Lyase</keyword>
<keyword id="KW-0479">Metal-binding</keyword>
<keyword id="KW-0627">Porphyrin biosynthesis</keyword>
<keyword id="KW-1185">Reference proteome</keyword>
<feature type="chain" id="PRO_1000019374" description="Coproporphyrin III ferrochelatase">
    <location>
        <begin position="1"/>
        <end position="364"/>
    </location>
</feature>
<feature type="binding site" evidence="1">
    <location>
        <position position="29"/>
    </location>
    <ligand>
        <name>Fe-coproporphyrin III</name>
        <dbReference type="ChEBI" id="CHEBI:68438"/>
    </ligand>
</feature>
<feature type="binding site" evidence="1">
    <location>
        <position position="118"/>
    </location>
    <ligand>
        <name>Fe-coproporphyrin III</name>
        <dbReference type="ChEBI" id="CHEBI:68438"/>
    </ligand>
</feature>
<feature type="binding site" evidence="1">
    <location>
        <position position="169"/>
    </location>
    <ligand>
        <name>Fe(2+)</name>
        <dbReference type="ChEBI" id="CHEBI:29033"/>
    </ligand>
</feature>
<feature type="binding site" evidence="1">
    <location>
        <position position="250"/>
    </location>
    <ligand>
        <name>Fe(2+)</name>
        <dbReference type="ChEBI" id="CHEBI:29033"/>
    </ligand>
</feature>
<evidence type="ECO:0000255" key="1">
    <source>
        <dbReference type="HAMAP-Rule" id="MF_00323"/>
    </source>
</evidence>
<protein>
    <recommendedName>
        <fullName evidence="1">Coproporphyrin III ferrochelatase</fullName>
        <ecNumber evidence="1">4.99.1.9</ecNumber>
    </recommendedName>
</protein>